<protein>
    <recommendedName>
        <fullName>Tetratricopeptide repeat protein 36</fullName>
        <shortName>TPR repeat protein 36</shortName>
    </recommendedName>
    <alternativeName>
        <fullName>HSP70-binding protein 21</fullName>
    </alternativeName>
</protein>
<proteinExistence type="evidence at protein level"/>
<sequence length="189" mass="20896">MGTPNDQAVLQAIFNPDTPFGDIVGLDLGEEAEKEEREEDEVFPQAQLEQSKALELQGVMAAEAGDLSTALERFGQAICLLPERASAYNNRAQARRLQGDVAGALEDLERAVELSGGRGRAARQSFVQRGLLARLQGRDDDARRDFERAARLGSPFARRQLVLLNPYAALCNRMLADMMGQLRRPRDSR</sequence>
<evidence type="ECO:0000303" key="1">
    <source>
    </source>
</evidence>
<evidence type="ECO:0000305" key="2"/>
<comment type="alternative products">
    <event type="alternative splicing"/>
    <isoform>
        <id>A6NLP5-1</id>
        <name>1</name>
        <sequence type="displayed"/>
    </isoform>
    <isoform>
        <id>A6NLP5-2</id>
        <name>2</name>
        <sequence type="described" ref="VSP_055760"/>
    </isoform>
</comment>
<comment type="similarity">
    <text evidence="2">Belongs to the TTC36 family.</text>
</comment>
<organism>
    <name type="scientific">Homo sapiens</name>
    <name type="common">Human</name>
    <dbReference type="NCBI Taxonomy" id="9606"/>
    <lineage>
        <taxon>Eukaryota</taxon>
        <taxon>Metazoa</taxon>
        <taxon>Chordata</taxon>
        <taxon>Craniata</taxon>
        <taxon>Vertebrata</taxon>
        <taxon>Euteleostomi</taxon>
        <taxon>Mammalia</taxon>
        <taxon>Eutheria</taxon>
        <taxon>Euarchontoglires</taxon>
        <taxon>Primates</taxon>
        <taxon>Haplorrhini</taxon>
        <taxon>Catarrhini</taxon>
        <taxon>Hominidae</taxon>
        <taxon>Homo</taxon>
    </lineage>
</organism>
<reference key="1">
    <citation type="submission" date="2008-02" db="EMBL/GenBank/DDBJ databases">
        <title>Cloning of HSP70 binding protein 21 in human PVR and breast cancer.</title>
        <authorList>
            <person name="Liu Q.H."/>
            <person name="Gao J.Y."/>
            <person name="Li J.M."/>
        </authorList>
    </citation>
    <scope>NUCLEOTIDE SEQUENCE [MRNA] (ISOFORM 1)</scope>
</reference>
<reference key="2">
    <citation type="journal article" date="2006" name="Nature">
        <title>Human chromosome 11 DNA sequence and analysis including novel gene identification.</title>
        <authorList>
            <person name="Taylor T.D."/>
            <person name="Noguchi H."/>
            <person name="Totoki Y."/>
            <person name="Toyoda A."/>
            <person name="Kuroki Y."/>
            <person name="Dewar K."/>
            <person name="Lloyd C."/>
            <person name="Itoh T."/>
            <person name="Takeda T."/>
            <person name="Kim D.-W."/>
            <person name="She X."/>
            <person name="Barlow K.F."/>
            <person name="Bloom T."/>
            <person name="Bruford E."/>
            <person name="Chang J.L."/>
            <person name="Cuomo C.A."/>
            <person name="Eichler E."/>
            <person name="FitzGerald M.G."/>
            <person name="Jaffe D.B."/>
            <person name="LaButti K."/>
            <person name="Nicol R."/>
            <person name="Park H.-S."/>
            <person name="Seaman C."/>
            <person name="Sougnez C."/>
            <person name="Yang X."/>
            <person name="Zimmer A.R."/>
            <person name="Zody M.C."/>
            <person name="Birren B.W."/>
            <person name="Nusbaum C."/>
            <person name="Fujiyama A."/>
            <person name="Hattori M."/>
            <person name="Rogers J."/>
            <person name="Lander E.S."/>
            <person name="Sakaki Y."/>
        </authorList>
    </citation>
    <scope>NUCLEOTIDE SEQUENCE [LARGE SCALE GENOMIC DNA]</scope>
</reference>
<reference key="3">
    <citation type="submission" date="2005-07" db="EMBL/GenBank/DDBJ databases">
        <authorList>
            <person name="Mural R.J."/>
            <person name="Istrail S."/>
            <person name="Sutton G.G."/>
            <person name="Florea L."/>
            <person name="Halpern A.L."/>
            <person name="Mobarry C.M."/>
            <person name="Lippert R."/>
            <person name="Walenz B."/>
            <person name="Shatkay H."/>
            <person name="Dew I."/>
            <person name="Miller J.R."/>
            <person name="Flanigan M.J."/>
            <person name="Edwards N.J."/>
            <person name="Bolanos R."/>
            <person name="Fasulo D."/>
            <person name="Halldorsson B.V."/>
            <person name="Hannenhalli S."/>
            <person name="Turner R."/>
            <person name="Yooseph S."/>
            <person name="Lu F."/>
            <person name="Nusskern D.R."/>
            <person name="Shue B.C."/>
            <person name="Zheng X.H."/>
            <person name="Zhong F."/>
            <person name="Delcher A.L."/>
            <person name="Huson D.H."/>
            <person name="Kravitz S.A."/>
            <person name="Mouchard L."/>
            <person name="Reinert K."/>
            <person name="Remington K.A."/>
            <person name="Clark A.G."/>
            <person name="Waterman M.S."/>
            <person name="Eichler E.E."/>
            <person name="Adams M.D."/>
            <person name="Hunkapiller M.W."/>
            <person name="Myers E.W."/>
            <person name="Venter J.C."/>
        </authorList>
    </citation>
    <scope>NUCLEOTIDE SEQUENCE [LARGE SCALE GENOMIC DNA]</scope>
</reference>
<reference key="4">
    <citation type="journal article" date="2004" name="Genome Res.">
        <title>The status, quality, and expansion of the NIH full-length cDNA project: the Mammalian Gene Collection (MGC).</title>
        <authorList>
            <consortium name="The MGC Project Team"/>
        </authorList>
    </citation>
    <scope>NUCLEOTIDE SEQUENCE [LARGE SCALE MRNA] (ISOFORMS 1 AND 2)</scope>
</reference>
<reference key="5">
    <citation type="journal article" date="2014" name="J. Proteomics">
        <title>An enzyme assisted RP-RPLC approach for in-depth analysis of human liver phosphoproteome.</title>
        <authorList>
            <person name="Bian Y."/>
            <person name="Song C."/>
            <person name="Cheng K."/>
            <person name="Dong M."/>
            <person name="Wang F."/>
            <person name="Huang J."/>
            <person name="Sun D."/>
            <person name="Wang L."/>
            <person name="Ye M."/>
            <person name="Zou H."/>
        </authorList>
    </citation>
    <scope>IDENTIFICATION BY MASS SPECTROMETRY [LARGE SCALE ANALYSIS]</scope>
    <source>
        <tissue>Liver</tissue>
    </source>
</reference>
<accession>A6NLP5</accession>
<accession>B7ZW72</accession>
<accession>B9EJD8</accession>
<name>TTC36_HUMAN</name>
<feature type="chain" id="PRO_0000332179" description="Tetratricopeptide repeat protein 36">
    <location>
        <begin position="1"/>
        <end position="189"/>
    </location>
</feature>
<feature type="repeat" description="TPR 1">
    <location>
        <begin position="51"/>
        <end position="84"/>
    </location>
</feature>
<feature type="repeat" description="TPR 2">
    <location>
        <begin position="86"/>
        <end position="118"/>
    </location>
</feature>
<feature type="repeat" description="TPR 3">
    <location>
        <begin position="123"/>
        <end position="156"/>
    </location>
</feature>
<feature type="splice variant" id="VSP_055760" description="In isoform 2." evidence="1">
    <location>
        <begin position="1"/>
        <end position="59"/>
    </location>
</feature>
<feature type="sequence variant" id="VAR_042972" description="In dbSNP:rs7111428.">
    <original>I</original>
    <variation>M</variation>
    <location>
        <position position="78"/>
    </location>
</feature>
<keyword id="KW-0025">Alternative splicing</keyword>
<keyword id="KW-1267">Proteomics identification</keyword>
<keyword id="KW-1185">Reference proteome</keyword>
<keyword id="KW-0677">Repeat</keyword>
<keyword id="KW-0802">TPR repeat</keyword>
<dbReference type="EMBL" id="EU489483">
    <property type="protein sequence ID" value="ACA62794.1"/>
    <property type="molecule type" value="mRNA"/>
</dbReference>
<dbReference type="EMBL" id="AP000941">
    <property type="status" value="NOT_ANNOTATED_CDS"/>
    <property type="molecule type" value="Genomic_DNA"/>
</dbReference>
<dbReference type="EMBL" id="CH471065">
    <property type="protein sequence ID" value="EAW67387.1"/>
    <property type="molecule type" value="Genomic_DNA"/>
</dbReference>
<dbReference type="EMBL" id="BC146916">
    <property type="protein sequence ID" value="AAI46917.1"/>
    <property type="molecule type" value="mRNA"/>
</dbReference>
<dbReference type="EMBL" id="BC146921">
    <property type="protein sequence ID" value="AAI46922.1"/>
    <property type="molecule type" value="mRNA"/>
</dbReference>
<dbReference type="EMBL" id="BC171906">
    <property type="protein sequence ID" value="AAI71906.1"/>
    <property type="molecule type" value="mRNA"/>
</dbReference>
<dbReference type="EMBL" id="BC171913">
    <property type="protein sequence ID" value="AAI71913.1"/>
    <property type="molecule type" value="mRNA"/>
</dbReference>
<dbReference type="CCDS" id="CCDS31687.1">
    <molecule id="A6NLP5-1"/>
</dbReference>
<dbReference type="RefSeq" id="NP_001073910.1">
    <molecule id="A6NLP5-1"/>
    <property type="nucleotide sequence ID" value="NM_001080441.4"/>
</dbReference>
<dbReference type="RefSeq" id="NP_001333025.1">
    <molecule id="A6NLP5-2"/>
    <property type="nucleotide sequence ID" value="NM_001346096.2"/>
</dbReference>
<dbReference type="RefSeq" id="NP_001333026.1">
    <molecule id="A6NLP5-2"/>
    <property type="nucleotide sequence ID" value="NM_001346097.2"/>
</dbReference>
<dbReference type="RefSeq" id="NP_001333027.1">
    <property type="nucleotide sequence ID" value="NM_001346098.1"/>
</dbReference>
<dbReference type="SMR" id="A6NLP5"/>
<dbReference type="BioGRID" id="126825">
    <property type="interactions" value="2"/>
</dbReference>
<dbReference type="FunCoup" id="A6NLP5">
    <property type="interactions" value="2"/>
</dbReference>
<dbReference type="STRING" id="9606.ENSP00000307640"/>
<dbReference type="PhosphoSitePlus" id="A6NLP5"/>
<dbReference type="BioMuta" id="TTC36"/>
<dbReference type="MassIVE" id="A6NLP5"/>
<dbReference type="PaxDb" id="9606-ENSP00000307640"/>
<dbReference type="PeptideAtlas" id="A6NLP5"/>
<dbReference type="ProteomicsDB" id="1487">
    <molecule id="A6NLP5-1"/>
</dbReference>
<dbReference type="ProteomicsDB" id="7272"/>
<dbReference type="Antibodypedia" id="52638">
    <property type="antibodies" value="8 antibodies from 7 providers"/>
</dbReference>
<dbReference type="DNASU" id="143941"/>
<dbReference type="Ensembl" id="ENST00000302783.10">
    <molecule id="A6NLP5-1"/>
    <property type="protein sequence ID" value="ENSP00000307640.4"/>
    <property type="gene ID" value="ENSG00000172425.12"/>
</dbReference>
<dbReference type="GeneID" id="143941"/>
<dbReference type="KEGG" id="hsa:143941"/>
<dbReference type="MANE-Select" id="ENST00000302783.10">
    <property type="protein sequence ID" value="ENSP00000307640.4"/>
    <property type="RefSeq nucleotide sequence ID" value="NM_001080441.4"/>
    <property type="RefSeq protein sequence ID" value="NP_001073910.1"/>
</dbReference>
<dbReference type="UCSC" id="uc001ptg.2">
    <molecule id="A6NLP5-1"/>
    <property type="organism name" value="human"/>
</dbReference>
<dbReference type="AGR" id="HGNC:33708"/>
<dbReference type="CTD" id="143941"/>
<dbReference type="DisGeNET" id="143941"/>
<dbReference type="GeneCards" id="TTC36"/>
<dbReference type="HGNC" id="HGNC:33708">
    <property type="gene designation" value="TTC36"/>
</dbReference>
<dbReference type="HPA" id="ENSG00000172425">
    <property type="expression patterns" value="Tissue enriched (liver)"/>
</dbReference>
<dbReference type="MIM" id="620701">
    <property type="type" value="gene"/>
</dbReference>
<dbReference type="neXtProt" id="NX_A6NLP5"/>
<dbReference type="OpenTargets" id="ENSG00000172425"/>
<dbReference type="PharmGKB" id="PA162407225"/>
<dbReference type="VEuPathDB" id="HostDB:ENSG00000172425"/>
<dbReference type="eggNOG" id="KOG4555">
    <property type="taxonomic scope" value="Eukaryota"/>
</dbReference>
<dbReference type="GeneTree" id="ENSGT00390000007968"/>
<dbReference type="HOGENOM" id="CLU_1464567_0_0_1"/>
<dbReference type="InParanoid" id="A6NLP5"/>
<dbReference type="OMA" id="CNQMLCE"/>
<dbReference type="OrthoDB" id="539634at2759"/>
<dbReference type="PAN-GO" id="A6NLP5">
    <property type="GO annotations" value="1 GO annotation based on evolutionary models"/>
</dbReference>
<dbReference type="PhylomeDB" id="A6NLP5"/>
<dbReference type="TreeFam" id="TF105820"/>
<dbReference type="PathwayCommons" id="A6NLP5"/>
<dbReference type="SIGNOR" id="A6NLP5"/>
<dbReference type="BioGRID-ORCS" id="143941">
    <property type="hits" value="13 hits in 1143 CRISPR screens"/>
</dbReference>
<dbReference type="GenomeRNAi" id="143941"/>
<dbReference type="Pharos" id="A6NLP5">
    <property type="development level" value="Tdark"/>
</dbReference>
<dbReference type="PRO" id="PR:A6NLP5"/>
<dbReference type="Proteomes" id="UP000005640">
    <property type="component" value="Chromosome 11"/>
</dbReference>
<dbReference type="RNAct" id="A6NLP5">
    <property type="molecule type" value="protein"/>
</dbReference>
<dbReference type="Bgee" id="ENSG00000172425">
    <property type="expression patterns" value="Expressed in right lobe of liver and 95 other cell types or tissues"/>
</dbReference>
<dbReference type="ExpressionAtlas" id="A6NLP5">
    <property type="expression patterns" value="baseline and differential"/>
</dbReference>
<dbReference type="GO" id="GO:0021954">
    <property type="term" value="P:central nervous system neuron development"/>
    <property type="evidence" value="ECO:0007669"/>
    <property type="project" value="Ensembl"/>
</dbReference>
<dbReference type="GO" id="GO:0007613">
    <property type="term" value="P:memory"/>
    <property type="evidence" value="ECO:0007669"/>
    <property type="project" value="Ensembl"/>
</dbReference>
<dbReference type="GO" id="GO:0032435">
    <property type="term" value="P:negative regulation of proteasomal ubiquitin-dependent protein catabolic process"/>
    <property type="evidence" value="ECO:0007669"/>
    <property type="project" value="Ensembl"/>
</dbReference>
<dbReference type="GO" id="GO:1902915">
    <property type="term" value="P:negative regulation of protein polyubiquitination"/>
    <property type="evidence" value="ECO:0007669"/>
    <property type="project" value="Ensembl"/>
</dbReference>
<dbReference type="GO" id="GO:0006570">
    <property type="term" value="P:tyrosine metabolic process"/>
    <property type="evidence" value="ECO:0000318"/>
    <property type="project" value="GO_Central"/>
</dbReference>
<dbReference type="GO" id="GO:0008542">
    <property type="term" value="P:visual learning"/>
    <property type="evidence" value="ECO:0007669"/>
    <property type="project" value="Ensembl"/>
</dbReference>
<dbReference type="FunFam" id="1.25.40.10:FF:000213">
    <property type="entry name" value="Tetratricopeptide repeat domain 36"/>
    <property type="match status" value="1"/>
</dbReference>
<dbReference type="Gene3D" id="1.25.40.10">
    <property type="entry name" value="Tetratricopeptide repeat domain"/>
    <property type="match status" value="1"/>
</dbReference>
<dbReference type="InterPro" id="IPR011990">
    <property type="entry name" value="TPR-like_helical_dom_sf"/>
</dbReference>
<dbReference type="InterPro" id="IPR019734">
    <property type="entry name" value="TPR_rpt"/>
</dbReference>
<dbReference type="InterPro" id="IPR038906">
    <property type="entry name" value="TTC36"/>
</dbReference>
<dbReference type="PANTHER" id="PTHR21405">
    <property type="entry name" value="CDNA SEQUENCE BC021608"/>
    <property type="match status" value="1"/>
</dbReference>
<dbReference type="PANTHER" id="PTHR21405:SF0">
    <property type="entry name" value="TETRATRICOPEPTIDE REPEAT PROTEIN 36"/>
    <property type="match status" value="1"/>
</dbReference>
<dbReference type="Pfam" id="PF13424">
    <property type="entry name" value="TPR_12"/>
    <property type="match status" value="1"/>
</dbReference>
<dbReference type="SMART" id="SM00028">
    <property type="entry name" value="TPR"/>
    <property type="match status" value="3"/>
</dbReference>
<dbReference type="SUPFAM" id="SSF48452">
    <property type="entry name" value="TPR-like"/>
    <property type="match status" value="1"/>
</dbReference>
<dbReference type="PROSITE" id="PS50005">
    <property type="entry name" value="TPR"/>
    <property type="match status" value="3"/>
</dbReference>
<dbReference type="PROSITE" id="PS50293">
    <property type="entry name" value="TPR_REGION"/>
    <property type="match status" value="1"/>
</dbReference>
<gene>
    <name type="primary">TTC36</name>
    <name type="synonym">HBP21</name>
</gene>